<protein>
    <recommendedName>
        <fullName evidence="1">Acetaldehyde dehydrogenase 1</fullName>
        <ecNumber evidence="1">1.2.1.10</ecNumber>
    </recommendedName>
    <alternativeName>
        <fullName evidence="1">Acetaldehyde dehydrogenase [acetylating] 1</fullName>
    </alternativeName>
</protein>
<feature type="chain" id="PRO_0000387654" description="Acetaldehyde dehydrogenase 1">
    <location>
        <begin position="1"/>
        <end position="304"/>
    </location>
</feature>
<feature type="active site" description="Acyl-thioester intermediate" evidence="1">
    <location>
        <position position="131"/>
    </location>
</feature>
<feature type="binding site" evidence="1">
    <location>
        <begin position="162"/>
        <end position="170"/>
    </location>
    <ligand>
        <name>NAD(+)</name>
        <dbReference type="ChEBI" id="CHEBI:57540"/>
    </ligand>
</feature>
<feature type="binding site" evidence="1">
    <location>
        <position position="273"/>
    </location>
    <ligand>
        <name>NAD(+)</name>
        <dbReference type="ChEBI" id="CHEBI:57540"/>
    </ligand>
</feature>
<accession>Q47HL9</accession>
<sequence length="304" mass="32382">MTQKIKCALIGPGNIGTDLLAKLKRSPFLEPVWMVGIDPESDGLRRAAEMGLKVTAEGVDGLLPHVLADGVQIAFDATSAYVHAENSRKLNALGVMMIDLTPAAIGPFCVPPVNLKELVGRKEMNVNMVTCGGQATIPMVAAISRVQKVKYGEIVATISSKSAGPGTRKNIDEFTRTTSGAIEKVGGAEKGKAIIIINPAEPPLMMRDTVHCLTEGTPDQAKITESIHAMIKEVQKYVPGYRLVNGPVFDGNRVSVFLEVEGLGDYLPKYAGNLDIMTAAAARTAEMFAEEIISGVLKLEPVVA</sequence>
<dbReference type="EC" id="1.2.1.10" evidence="1"/>
<dbReference type="EMBL" id="CP000089">
    <property type="protein sequence ID" value="AAZ45662.1"/>
    <property type="molecule type" value="Genomic_DNA"/>
</dbReference>
<dbReference type="SMR" id="Q47HL9"/>
<dbReference type="STRING" id="159087.Daro_0906"/>
<dbReference type="KEGG" id="dar:Daro_0906"/>
<dbReference type="eggNOG" id="COG4569">
    <property type="taxonomic scope" value="Bacteria"/>
</dbReference>
<dbReference type="HOGENOM" id="CLU_062208_0_0_4"/>
<dbReference type="OrthoDB" id="9786743at2"/>
<dbReference type="GO" id="GO:0008774">
    <property type="term" value="F:acetaldehyde dehydrogenase (acetylating) activity"/>
    <property type="evidence" value="ECO:0007669"/>
    <property type="project" value="UniProtKB-UniRule"/>
</dbReference>
<dbReference type="GO" id="GO:0051287">
    <property type="term" value="F:NAD binding"/>
    <property type="evidence" value="ECO:0007669"/>
    <property type="project" value="UniProtKB-UniRule"/>
</dbReference>
<dbReference type="GO" id="GO:0009056">
    <property type="term" value="P:catabolic process"/>
    <property type="evidence" value="ECO:0007669"/>
    <property type="project" value="UniProtKB-KW"/>
</dbReference>
<dbReference type="CDD" id="cd23933">
    <property type="entry name" value="ALDH_C"/>
    <property type="match status" value="1"/>
</dbReference>
<dbReference type="Gene3D" id="3.30.360.10">
    <property type="entry name" value="Dihydrodipicolinate Reductase, domain 2"/>
    <property type="match status" value="1"/>
</dbReference>
<dbReference type="Gene3D" id="3.40.50.720">
    <property type="entry name" value="NAD(P)-binding Rossmann-like Domain"/>
    <property type="match status" value="1"/>
</dbReference>
<dbReference type="HAMAP" id="MF_01657">
    <property type="entry name" value="Ac_ald_DH_ac"/>
    <property type="match status" value="1"/>
</dbReference>
<dbReference type="InterPro" id="IPR003361">
    <property type="entry name" value="Acetaldehyde_dehydrogenase"/>
</dbReference>
<dbReference type="InterPro" id="IPR015426">
    <property type="entry name" value="Acetylaldehyde_DH_C"/>
</dbReference>
<dbReference type="InterPro" id="IPR036291">
    <property type="entry name" value="NAD(P)-bd_dom_sf"/>
</dbReference>
<dbReference type="InterPro" id="IPR000534">
    <property type="entry name" value="Semialdehyde_DH_NAD-bd"/>
</dbReference>
<dbReference type="NCBIfam" id="TIGR03215">
    <property type="entry name" value="ac_ald_DH_ac"/>
    <property type="match status" value="1"/>
</dbReference>
<dbReference type="NCBIfam" id="NF006157">
    <property type="entry name" value="PRK08300.1"/>
    <property type="match status" value="1"/>
</dbReference>
<dbReference type="Pfam" id="PF09290">
    <property type="entry name" value="AcetDehyd-dimer"/>
    <property type="match status" value="1"/>
</dbReference>
<dbReference type="PIRSF" id="PIRSF015689">
    <property type="entry name" value="Actaldh_dh_actl"/>
    <property type="match status" value="1"/>
</dbReference>
<dbReference type="SMART" id="SM00859">
    <property type="entry name" value="Semialdhyde_dh"/>
    <property type="match status" value="1"/>
</dbReference>
<dbReference type="SUPFAM" id="SSF55347">
    <property type="entry name" value="Glyceraldehyde-3-phosphate dehydrogenase-like, C-terminal domain"/>
    <property type="match status" value="1"/>
</dbReference>
<dbReference type="SUPFAM" id="SSF51735">
    <property type="entry name" value="NAD(P)-binding Rossmann-fold domains"/>
    <property type="match status" value="1"/>
</dbReference>
<keyword id="KW-0058">Aromatic hydrocarbons catabolism</keyword>
<keyword id="KW-0520">NAD</keyword>
<keyword id="KW-0560">Oxidoreductase</keyword>
<organism>
    <name type="scientific">Dechloromonas aromatica (strain RCB)</name>
    <dbReference type="NCBI Taxonomy" id="159087"/>
    <lineage>
        <taxon>Bacteria</taxon>
        <taxon>Pseudomonadati</taxon>
        <taxon>Pseudomonadota</taxon>
        <taxon>Betaproteobacteria</taxon>
        <taxon>Rhodocyclales</taxon>
        <taxon>Azonexaceae</taxon>
        <taxon>Dechloromonas</taxon>
    </lineage>
</organism>
<gene>
    <name type="ordered locus">Daro_0906</name>
</gene>
<proteinExistence type="inferred from homology"/>
<name>ACDH1_DECAR</name>
<comment type="catalytic activity">
    <reaction evidence="1">
        <text>acetaldehyde + NAD(+) + CoA = acetyl-CoA + NADH + H(+)</text>
        <dbReference type="Rhea" id="RHEA:23288"/>
        <dbReference type="ChEBI" id="CHEBI:15343"/>
        <dbReference type="ChEBI" id="CHEBI:15378"/>
        <dbReference type="ChEBI" id="CHEBI:57287"/>
        <dbReference type="ChEBI" id="CHEBI:57288"/>
        <dbReference type="ChEBI" id="CHEBI:57540"/>
        <dbReference type="ChEBI" id="CHEBI:57945"/>
        <dbReference type="EC" id="1.2.1.10"/>
    </reaction>
</comment>
<comment type="similarity">
    <text evidence="1">Belongs to the acetaldehyde dehydrogenase family.</text>
</comment>
<evidence type="ECO:0000255" key="1">
    <source>
        <dbReference type="HAMAP-Rule" id="MF_01657"/>
    </source>
</evidence>
<reference key="1">
    <citation type="journal article" date="2009" name="BMC Genomics">
        <title>Metabolic analysis of the soil microbe Dechloromonas aromatica str. RCB: indications of a surprisingly complex life-style and cryptic anaerobic pathways for aromatic degradation.</title>
        <authorList>
            <person name="Salinero K.K."/>
            <person name="Keller K."/>
            <person name="Feil W.S."/>
            <person name="Feil H."/>
            <person name="Trong S."/>
            <person name="Di Bartolo G."/>
            <person name="Lapidus A."/>
        </authorList>
    </citation>
    <scope>NUCLEOTIDE SEQUENCE [LARGE SCALE GENOMIC DNA]</scope>
    <source>
        <strain>RCB</strain>
    </source>
</reference>